<gene>
    <name evidence="1" type="primary">leuS</name>
    <name type="ordered locus">TDE_2339</name>
</gene>
<protein>
    <recommendedName>
        <fullName evidence="1">Leucine--tRNA ligase</fullName>
        <ecNumber evidence="1">6.1.1.4</ecNumber>
    </recommendedName>
    <alternativeName>
        <fullName evidence="1">Leucyl-tRNA synthetase</fullName>
        <shortName evidence="1">LeuRS</shortName>
    </alternativeName>
</protein>
<evidence type="ECO:0000255" key="1">
    <source>
        <dbReference type="HAMAP-Rule" id="MF_00049"/>
    </source>
</evidence>
<name>SYL_TREDE</name>
<feature type="chain" id="PRO_0000152108" description="Leucine--tRNA ligase">
    <location>
        <begin position="1"/>
        <end position="858"/>
    </location>
</feature>
<feature type="short sequence motif" description="'HIGH' region">
    <location>
        <begin position="43"/>
        <end position="54"/>
    </location>
</feature>
<feature type="short sequence motif" description="'KMSKS' region">
    <location>
        <begin position="629"/>
        <end position="633"/>
    </location>
</feature>
<feature type="binding site" evidence="1">
    <location>
        <position position="632"/>
    </location>
    <ligand>
        <name>ATP</name>
        <dbReference type="ChEBI" id="CHEBI:30616"/>
    </ligand>
</feature>
<sequence length="858" mass="98404">MAYPFSTIEPKWQKYWEENKTFKTVEDKNYPKDKRLYILDMFPYPSGDGLHVGHPEGYTATDIYSRFLRMSGYNVLHPMGFDSFGLPAENYAIKTGIHPLITTRKNMETFRKQIKSIGLSYDWDREISTSEESYYKWTQWIFLQLFKKGLAYEKEAPINWCPSCLTGLANEEVKDGKCERCGAQIQRKNLRQWILKITEYAERLLEDLDELDWPESIKIMQKNWIGKSTGAEVDFALVDKDGKETGQKIKVYTTRPDTIFGATYMVLAPEHELVKSITTSNQEKAVAAYIEEAAKKSDLERTDLAKNKTGVFTGAYAINPLTEQKIPVWISDYILISYGTGAIMAVPAHDERDFEFAAQFNLPKIKVVAGAEEWESGKRDFSEEPKACTTEDGYSVNSKQFDGLKTEEAKTKITEHLENLGIAKRAVNYKLRDWIFSRQRYWGEPIPLVHCPSCGIVPLNEHDLPLTLPQVESYAPTGTGESPLAAIDSWVNTKCPKCGKEAKRETNTMPQWAGSCWYYLRFIDPHNNEAFADKEKCDYWMPVDLYVGGTEHAVLHLLYARFWHKVLYDLGLVSTKEPFTRLINQGMITSFAYMRKNKSLVPVDKVKKISETEFEDIETGEKLEQVIAKMSKSLKNVINPDDIIKEYGADTLRLYEMFLGPLEVSKPWNTSGIMGVFRFLEKIWNLSDREIYKTPVNDTSTPETKTLTVLLNKTIKKVTEDTASLNFNTAISQMMIFINEVSKHKKIPHYVWYNFVKLLNPYAPHLAEELWQKMGNDESIAYSHWPMFVEKFCVDQTCTVVVQVNGKLRGKFEAEAGTSKEELERLALSNEGAIRNIEGKEIKKIITVPDKLVNIVVQ</sequence>
<proteinExistence type="inferred from homology"/>
<comment type="catalytic activity">
    <reaction evidence="1">
        <text>tRNA(Leu) + L-leucine + ATP = L-leucyl-tRNA(Leu) + AMP + diphosphate</text>
        <dbReference type="Rhea" id="RHEA:11688"/>
        <dbReference type="Rhea" id="RHEA-COMP:9613"/>
        <dbReference type="Rhea" id="RHEA-COMP:9622"/>
        <dbReference type="ChEBI" id="CHEBI:30616"/>
        <dbReference type="ChEBI" id="CHEBI:33019"/>
        <dbReference type="ChEBI" id="CHEBI:57427"/>
        <dbReference type="ChEBI" id="CHEBI:78442"/>
        <dbReference type="ChEBI" id="CHEBI:78494"/>
        <dbReference type="ChEBI" id="CHEBI:456215"/>
        <dbReference type="EC" id="6.1.1.4"/>
    </reaction>
</comment>
<comment type="subcellular location">
    <subcellularLocation>
        <location evidence="1">Cytoplasm</location>
    </subcellularLocation>
</comment>
<comment type="similarity">
    <text evidence="1">Belongs to the class-I aminoacyl-tRNA synthetase family.</text>
</comment>
<keyword id="KW-0030">Aminoacyl-tRNA synthetase</keyword>
<keyword id="KW-0067">ATP-binding</keyword>
<keyword id="KW-0963">Cytoplasm</keyword>
<keyword id="KW-0436">Ligase</keyword>
<keyword id="KW-0547">Nucleotide-binding</keyword>
<keyword id="KW-0648">Protein biosynthesis</keyword>
<keyword id="KW-1185">Reference proteome</keyword>
<organism>
    <name type="scientific">Treponema denticola (strain ATCC 35405 / DSM 14222 / CIP 103919 / JCM 8153 / KCTC 15104)</name>
    <dbReference type="NCBI Taxonomy" id="243275"/>
    <lineage>
        <taxon>Bacteria</taxon>
        <taxon>Pseudomonadati</taxon>
        <taxon>Spirochaetota</taxon>
        <taxon>Spirochaetia</taxon>
        <taxon>Spirochaetales</taxon>
        <taxon>Treponemataceae</taxon>
        <taxon>Treponema</taxon>
    </lineage>
</organism>
<reference key="1">
    <citation type="journal article" date="2004" name="Proc. Natl. Acad. Sci. U.S.A.">
        <title>Comparison of the genome of the oral pathogen Treponema denticola with other spirochete genomes.</title>
        <authorList>
            <person name="Seshadri R."/>
            <person name="Myers G.S.A."/>
            <person name="Tettelin H."/>
            <person name="Eisen J.A."/>
            <person name="Heidelberg J.F."/>
            <person name="Dodson R.J."/>
            <person name="Davidsen T.M."/>
            <person name="DeBoy R.T."/>
            <person name="Fouts D.E."/>
            <person name="Haft D.H."/>
            <person name="Selengut J."/>
            <person name="Ren Q."/>
            <person name="Brinkac L.M."/>
            <person name="Madupu R."/>
            <person name="Kolonay J.F."/>
            <person name="Durkin S.A."/>
            <person name="Daugherty S.C."/>
            <person name="Shetty J."/>
            <person name="Shvartsbeyn A."/>
            <person name="Gebregeorgis E."/>
            <person name="Geer K."/>
            <person name="Tsegaye G."/>
            <person name="Malek J.A."/>
            <person name="Ayodeji B."/>
            <person name="Shatsman S."/>
            <person name="McLeod M.P."/>
            <person name="Smajs D."/>
            <person name="Howell J.K."/>
            <person name="Pal S."/>
            <person name="Amin A."/>
            <person name="Vashisth P."/>
            <person name="McNeill T.Z."/>
            <person name="Xiang Q."/>
            <person name="Sodergren E."/>
            <person name="Baca E."/>
            <person name="Weinstock G.M."/>
            <person name="Norris S.J."/>
            <person name="Fraser C.M."/>
            <person name="Paulsen I.T."/>
        </authorList>
    </citation>
    <scope>NUCLEOTIDE SEQUENCE [LARGE SCALE GENOMIC DNA]</scope>
    <source>
        <strain>ATCC 35405 / DSM 14222 / CIP 103919 / JCM 8153 / KCTC 15104</strain>
    </source>
</reference>
<dbReference type="EC" id="6.1.1.4" evidence="1"/>
<dbReference type="EMBL" id="AE017226">
    <property type="protein sequence ID" value="AAS12857.1"/>
    <property type="molecule type" value="Genomic_DNA"/>
</dbReference>
<dbReference type="RefSeq" id="NP_972938.1">
    <property type="nucleotide sequence ID" value="NC_002967.9"/>
</dbReference>
<dbReference type="RefSeq" id="WP_002680258.1">
    <property type="nucleotide sequence ID" value="NC_002967.9"/>
</dbReference>
<dbReference type="SMR" id="Q73K81"/>
<dbReference type="STRING" id="243275.TDE_2339"/>
<dbReference type="PaxDb" id="243275-TDE_2339"/>
<dbReference type="GeneID" id="2739434"/>
<dbReference type="KEGG" id="tde:TDE_2339"/>
<dbReference type="PATRIC" id="fig|243275.7.peg.2207"/>
<dbReference type="eggNOG" id="COG0495">
    <property type="taxonomic scope" value="Bacteria"/>
</dbReference>
<dbReference type="HOGENOM" id="CLU_004427_0_0_12"/>
<dbReference type="OrthoDB" id="9810365at2"/>
<dbReference type="Proteomes" id="UP000008212">
    <property type="component" value="Chromosome"/>
</dbReference>
<dbReference type="GO" id="GO:0005829">
    <property type="term" value="C:cytosol"/>
    <property type="evidence" value="ECO:0007669"/>
    <property type="project" value="TreeGrafter"/>
</dbReference>
<dbReference type="GO" id="GO:0002161">
    <property type="term" value="F:aminoacyl-tRNA deacylase activity"/>
    <property type="evidence" value="ECO:0007669"/>
    <property type="project" value="InterPro"/>
</dbReference>
<dbReference type="GO" id="GO:0005524">
    <property type="term" value="F:ATP binding"/>
    <property type="evidence" value="ECO:0007669"/>
    <property type="project" value="UniProtKB-UniRule"/>
</dbReference>
<dbReference type="GO" id="GO:0004823">
    <property type="term" value="F:leucine-tRNA ligase activity"/>
    <property type="evidence" value="ECO:0007669"/>
    <property type="project" value="UniProtKB-UniRule"/>
</dbReference>
<dbReference type="GO" id="GO:0006429">
    <property type="term" value="P:leucyl-tRNA aminoacylation"/>
    <property type="evidence" value="ECO:0007669"/>
    <property type="project" value="UniProtKB-UniRule"/>
</dbReference>
<dbReference type="CDD" id="cd07958">
    <property type="entry name" value="Anticodon_Ia_Leu_BEm"/>
    <property type="match status" value="1"/>
</dbReference>
<dbReference type="CDD" id="cd00812">
    <property type="entry name" value="LeuRS_core"/>
    <property type="match status" value="1"/>
</dbReference>
<dbReference type="FunFam" id="1.10.730.10:FF:000012">
    <property type="entry name" value="Leucine--tRNA ligase"/>
    <property type="match status" value="1"/>
</dbReference>
<dbReference type="FunFam" id="3.40.50.620:FF:000056">
    <property type="entry name" value="Leucine--tRNA ligase"/>
    <property type="match status" value="1"/>
</dbReference>
<dbReference type="FunFam" id="3.40.50.620:FF:000077">
    <property type="entry name" value="Leucine--tRNA ligase"/>
    <property type="match status" value="1"/>
</dbReference>
<dbReference type="FunFam" id="1.10.730.10:FF:000011">
    <property type="entry name" value="Leucine--tRNA ligase chloroplastic/mitochondrial"/>
    <property type="match status" value="1"/>
</dbReference>
<dbReference type="Gene3D" id="3.40.50.620">
    <property type="entry name" value="HUPs"/>
    <property type="match status" value="2"/>
</dbReference>
<dbReference type="Gene3D" id="1.10.730.10">
    <property type="entry name" value="Isoleucyl-tRNA Synthetase, Domain 1"/>
    <property type="match status" value="1"/>
</dbReference>
<dbReference type="HAMAP" id="MF_00049_B">
    <property type="entry name" value="Leu_tRNA_synth_B"/>
    <property type="match status" value="1"/>
</dbReference>
<dbReference type="InterPro" id="IPR001412">
    <property type="entry name" value="aa-tRNA-synth_I_CS"/>
</dbReference>
<dbReference type="InterPro" id="IPR002300">
    <property type="entry name" value="aa-tRNA-synth_Ia"/>
</dbReference>
<dbReference type="InterPro" id="IPR002302">
    <property type="entry name" value="Leu-tRNA-ligase"/>
</dbReference>
<dbReference type="InterPro" id="IPR025709">
    <property type="entry name" value="Leu_tRNA-synth_edit"/>
</dbReference>
<dbReference type="InterPro" id="IPR013155">
    <property type="entry name" value="M/V/L/I-tRNA-synth_anticd-bd"/>
</dbReference>
<dbReference type="InterPro" id="IPR015413">
    <property type="entry name" value="Methionyl/Leucyl_tRNA_Synth"/>
</dbReference>
<dbReference type="InterPro" id="IPR014729">
    <property type="entry name" value="Rossmann-like_a/b/a_fold"/>
</dbReference>
<dbReference type="InterPro" id="IPR009080">
    <property type="entry name" value="tRNAsynth_Ia_anticodon-bd"/>
</dbReference>
<dbReference type="InterPro" id="IPR009008">
    <property type="entry name" value="Val/Leu/Ile-tRNA-synth_edit"/>
</dbReference>
<dbReference type="NCBIfam" id="TIGR00396">
    <property type="entry name" value="leuS_bact"/>
    <property type="match status" value="1"/>
</dbReference>
<dbReference type="PANTHER" id="PTHR43740:SF2">
    <property type="entry name" value="LEUCINE--TRNA LIGASE, MITOCHONDRIAL"/>
    <property type="match status" value="1"/>
</dbReference>
<dbReference type="PANTHER" id="PTHR43740">
    <property type="entry name" value="LEUCYL-TRNA SYNTHETASE"/>
    <property type="match status" value="1"/>
</dbReference>
<dbReference type="Pfam" id="PF08264">
    <property type="entry name" value="Anticodon_1"/>
    <property type="match status" value="1"/>
</dbReference>
<dbReference type="Pfam" id="PF00133">
    <property type="entry name" value="tRNA-synt_1"/>
    <property type="match status" value="2"/>
</dbReference>
<dbReference type="Pfam" id="PF13603">
    <property type="entry name" value="tRNA-synt_1_2"/>
    <property type="match status" value="1"/>
</dbReference>
<dbReference type="Pfam" id="PF09334">
    <property type="entry name" value="tRNA-synt_1g"/>
    <property type="match status" value="1"/>
</dbReference>
<dbReference type="PRINTS" id="PR00985">
    <property type="entry name" value="TRNASYNTHLEU"/>
</dbReference>
<dbReference type="SUPFAM" id="SSF47323">
    <property type="entry name" value="Anticodon-binding domain of a subclass of class I aminoacyl-tRNA synthetases"/>
    <property type="match status" value="1"/>
</dbReference>
<dbReference type="SUPFAM" id="SSF52374">
    <property type="entry name" value="Nucleotidylyl transferase"/>
    <property type="match status" value="1"/>
</dbReference>
<dbReference type="SUPFAM" id="SSF50677">
    <property type="entry name" value="ValRS/IleRS/LeuRS editing domain"/>
    <property type="match status" value="1"/>
</dbReference>
<dbReference type="PROSITE" id="PS00178">
    <property type="entry name" value="AA_TRNA_LIGASE_I"/>
    <property type="match status" value="1"/>
</dbReference>
<accession>Q73K81</accession>